<dbReference type="EMBL" id="X76078">
    <property type="protein sequence ID" value="CAA53678.1"/>
    <property type="molecule type" value="Genomic_DNA"/>
</dbReference>
<dbReference type="EMBL" id="Z35890">
    <property type="protein sequence ID" value="CAA84963.1"/>
    <property type="molecule type" value="Genomic_DNA"/>
</dbReference>
<dbReference type="EMBL" id="X06830">
    <property type="protein sequence ID" value="CAA29986.1"/>
    <property type="molecule type" value="Genomic_DNA"/>
</dbReference>
<dbReference type="EMBL" id="BK006936">
    <property type="protein sequence ID" value="DAA07143.1"/>
    <property type="molecule type" value="Genomic_DNA"/>
</dbReference>
<dbReference type="PIR" id="S45877">
    <property type="entry name" value="S45877"/>
</dbReference>
<dbReference type="RefSeq" id="NP_009577.1">
    <property type="nucleotide sequence ID" value="NM_001178369.1"/>
</dbReference>
<dbReference type="SMR" id="P05316"/>
<dbReference type="BioGRID" id="32724">
    <property type="interactions" value="22"/>
</dbReference>
<dbReference type="DIP" id="DIP-4892N"/>
<dbReference type="FunCoup" id="P05316">
    <property type="interactions" value="751"/>
</dbReference>
<dbReference type="IntAct" id="P05316">
    <property type="interactions" value="32"/>
</dbReference>
<dbReference type="STRING" id="4932.YBR021W"/>
<dbReference type="TCDB" id="2.A.39.3.2">
    <property type="family name" value="the nucleobase:cation symporter-1 (ncs1) family"/>
</dbReference>
<dbReference type="iPTMnet" id="P05316"/>
<dbReference type="PaxDb" id="4932-YBR021W"/>
<dbReference type="PeptideAtlas" id="P05316"/>
<dbReference type="EnsemblFungi" id="YBR021W_mRNA">
    <property type="protein sequence ID" value="YBR021W"/>
    <property type="gene ID" value="YBR021W"/>
</dbReference>
<dbReference type="GeneID" id="852309"/>
<dbReference type="KEGG" id="sce:YBR021W"/>
<dbReference type="AGR" id="SGD:S000000225"/>
<dbReference type="SGD" id="S000000225">
    <property type="gene designation" value="FUR4"/>
</dbReference>
<dbReference type="VEuPathDB" id="FungiDB:YBR021W"/>
<dbReference type="eggNOG" id="KOG2466">
    <property type="taxonomic scope" value="Eukaryota"/>
</dbReference>
<dbReference type="GeneTree" id="ENSGT00940000176299"/>
<dbReference type="HOGENOM" id="CLU_021555_2_2_1"/>
<dbReference type="InParanoid" id="P05316"/>
<dbReference type="OMA" id="CGTDMSA"/>
<dbReference type="OrthoDB" id="2018619at2759"/>
<dbReference type="BioCyc" id="YEAST:G3O-29002-MONOMER"/>
<dbReference type="BioGRID-ORCS" id="852309">
    <property type="hits" value="5 hits in 10 CRISPR screens"/>
</dbReference>
<dbReference type="PRO" id="PR:P05316"/>
<dbReference type="Proteomes" id="UP000002311">
    <property type="component" value="Chromosome II"/>
</dbReference>
<dbReference type="RNAct" id="P05316">
    <property type="molecule type" value="protein"/>
</dbReference>
<dbReference type="GO" id="GO:0071944">
    <property type="term" value="C:cell periphery"/>
    <property type="evidence" value="ECO:0007005"/>
    <property type="project" value="SGD"/>
</dbReference>
<dbReference type="GO" id="GO:0032126">
    <property type="term" value="C:eisosome"/>
    <property type="evidence" value="ECO:0000314"/>
    <property type="project" value="SGD"/>
</dbReference>
<dbReference type="GO" id="GO:0000324">
    <property type="term" value="C:fungal-type vacuole"/>
    <property type="evidence" value="ECO:0007005"/>
    <property type="project" value="SGD"/>
</dbReference>
<dbReference type="GO" id="GO:0005886">
    <property type="term" value="C:plasma membrane"/>
    <property type="evidence" value="ECO:0000314"/>
    <property type="project" value="SGD"/>
</dbReference>
<dbReference type="GO" id="GO:0015205">
    <property type="term" value="F:nucleobase transmembrane transporter activity"/>
    <property type="evidence" value="ECO:0000318"/>
    <property type="project" value="GO_Central"/>
</dbReference>
<dbReference type="GO" id="GO:0015505">
    <property type="term" value="F:uracil:monoatomic cation symporter activity"/>
    <property type="evidence" value="ECO:0000314"/>
    <property type="project" value="SGD"/>
</dbReference>
<dbReference type="GO" id="GO:0015851">
    <property type="term" value="P:nucleobase transport"/>
    <property type="evidence" value="ECO:0000318"/>
    <property type="project" value="GO_Central"/>
</dbReference>
<dbReference type="GO" id="GO:0055085">
    <property type="term" value="P:transmembrane transport"/>
    <property type="evidence" value="ECO:0000314"/>
    <property type="project" value="SGD"/>
</dbReference>
<dbReference type="GO" id="GO:0015857">
    <property type="term" value="P:uracil transport"/>
    <property type="evidence" value="ECO:0000314"/>
    <property type="project" value="SGD"/>
</dbReference>
<dbReference type="CDD" id="cd11482">
    <property type="entry name" value="SLC-NCS1sbd_NRT1-like"/>
    <property type="match status" value="1"/>
</dbReference>
<dbReference type="FunFam" id="1.10.4160.10:FF:000001">
    <property type="entry name" value="Uracil permease, putative"/>
    <property type="match status" value="1"/>
</dbReference>
<dbReference type="Gene3D" id="1.10.4160.10">
    <property type="entry name" value="Hydantoin permease"/>
    <property type="match status" value="1"/>
</dbReference>
<dbReference type="InterPro" id="IPR012681">
    <property type="entry name" value="NCS1"/>
</dbReference>
<dbReference type="InterPro" id="IPR001248">
    <property type="entry name" value="Pur-cyt_permease"/>
</dbReference>
<dbReference type="InterPro" id="IPR045225">
    <property type="entry name" value="Uracil/uridine/allantoin_perm"/>
</dbReference>
<dbReference type="NCBIfam" id="TIGR00800">
    <property type="entry name" value="ncs1"/>
    <property type="match status" value="1"/>
</dbReference>
<dbReference type="PANTHER" id="PTHR30618:SF2">
    <property type="entry name" value="ALLANTOIN PERMEASE-RELATED"/>
    <property type="match status" value="1"/>
</dbReference>
<dbReference type="PANTHER" id="PTHR30618">
    <property type="entry name" value="NCS1 FAMILY PURINE/PYRIMIDINE TRANSPORTER"/>
    <property type="match status" value="1"/>
</dbReference>
<dbReference type="Pfam" id="PF02133">
    <property type="entry name" value="Transp_cyt_pur"/>
    <property type="match status" value="1"/>
</dbReference>
<feature type="chain" id="PRO_0000197925" description="Uracil permease">
    <location>
        <begin position="1"/>
        <end position="633"/>
    </location>
</feature>
<feature type="transmembrane region" description="Helical" evidence="1">
    <location>
        <begin position="143"/>
        <end position="163"/>
    </location>
</feature>
<feature type="transmembrane region" description="Helical" evidence="1">
    <location>
        <begin position="173"/>
        <end position="193"/>
    </location>
</feature>
<feature type="transmembrane region" description="Helical" evidence="1">
    <location>
        <begin position="197"/>
        <end position="217"/>
    </location>
</feature>
<feature type="transmembrane region" description="Helical" evidence="1">
    <location>
        <begin position="242"/>
        <end position="262"/>
    </location>
</feature>
<feature type="transmembrane region" description="Helical" evidence="1">
    <location>
        <begin position="268"/>
        <end position="288"/>
    </location>
</feature>
<feature type="transmembrane region" description="Helical" evidence="1">
    <location>
        <begin position="310"/>
        <end position="330"/>
    </location>
</feature>
<feature type="transmembrane region" description="Helical" evidence="1">
    <location>
        <begin position="350"/>
        <end position="370"/>
    </location>
</feature>
<feature type="transmembrane region" description="Helical" evidence="1">
    <location>
        <begin position="400"/>
        <end position="420"/>
    </location>
</feature>
<feature type="transmembrane region" description="Helical" evidence="1">
    <location>
        <begin position="442"/>
        <end position="462"/>
    </location>
</feature>
<feature type="transmembrane region" description="Helical" evidence="1">
    <location>
        <begin position="465"/>
        <end position="485"/>
    </location>
</feature>
<feature type="transmembrane region" description="Helical" evidence="1">
    <location>
        <begin position="521"/>
        <end position="541"/>
    </location>
</feature>
<feature type="transmembrane region" description="Helical" evidence="1">
    <location>
        <begin position="559"/>
        <end position="579"/>
    </location>
</feature>
<feature type="sequence conflict" description="In Ref. 1; CAA29986." evidence="2" ref="1">
    <original>M</original>
    <variation>I</variation>
    <location>
        <position position="217"/>
    </location>
</feature>
<feature type="sequence conflict" description="In Ref. 1; CAA29986." evidence="2" ref="1">
    <original>K</original>
    <variation>R</variation>
    <location>
        <position position="229"/>
    </location>
</feature>
<feature type="sequence conflict" description="In Ref. 1; CAA29986." evidence="2" ref="1">
    <original>G</original>
    <variation>R</variation>
    <location>
        <position position="320"/>
    </location>
</feature>
<evidence type="ECO:0000255" key="1"/>
<evidence type="ECO:0000305" key="2"/>
<proteinExistence type="inferred from homology"/>
<name>FUR4_YEAST</name>
<protein>
    <recommendedName>
        <fullName>Uracil permease</fullName>
    </recommendedName>
</protein>
<reference key="1">
    <citation type="journal article" date="1988" name="Eur. J. Biochem.">
        <title>Primary structure of the uracil transport protein of Saccharomyces cerevisiae.</title>
        <authorList>
            <person name="Jund R."/>
            <person name="Weber E."/>
            <person name="Chevallier M.-R."/>
        </authorList>
    </citation>
    <scope>NUCLEOTIDE SEQUENCE [GENOMIC DNA]</scope>
    <source>
        <strain>ATCC 28383 / FL100 / VTT C-80102</strain>
    </source>
</reference>
<reference key="2">
    <citation type="journal article" date="1994" name="Yeast">
        <title>The complete sequence of a 33 kb fragment on the right arm of chromosome II from Saccharomyces cerevisiae reveals 16 open reading frames, including ten new open reading frames, five previously identified genes and a homologue of the SCO1 gene.</title>
        <authorList>
            <person name="Smits P.H.M."/>
            <person name="de Haan M."/>
            <person name="Maat C."/>
            <person name="Grivell L.A."/>
        </authorList>
    </citation>
    <scope>NUCLEOTIDE SEQUENCE [GENOMIC DNA]</scope>
    <source>
        <strain>ATCC 204508 / S288c</strain>
    </source>
</reference>
<reference key="3">
    <citation type="journal article" date="1994" name="EMBO J.">
        <title>Complete DNA sequence of yeast chromosome II.</title>
        <authorList>
            <person name="Feldmann H."/>
            <person name="Aigle M."/>
            <person name="Aljinovic G."/>
            <person name="Andre B."/>
            <person name="Baclet M.C."/>
            <person name="Barthe C."/>
            <person name="Baur A."/>
            <person name="Becam A.-M."/>
            <person name="Biteau N."/>
            <person name="Boles E."/>
            <person name="Brandt T."/>
            <person name="Brendel M."/>
            <person name="Brueckner M."/>
            <person name="Bussereau F."/>
            <person name="Christiansen C."/>
            <person name="Contreras R."/>
            <person name="Crouzet M."/>
            <person name="Cziepluch C."/>
            <person name="Demolis N."/>
            <person name="Delaveau T."/>
            <person name="Doignon F."/>
            <person name="Domdey H."/>
            <person name="Duesterhus S."/>
            <person name="Dubois E."/>
            <person name="Dujon B."/>
            <person name="El Bakkoury M."/>
            <person name="Entian K.-D."/>
            <person name="Feuermann M."/>
            <person name="Fiers W."/>
            <person name="Fobo G.M."/>
            <person name="Fritz C."/>
            <person name="Gassenhuber J."/>
            <person name="Glansdorff N."/>
            <person name="Goffeau A."/>
            <person name="Grivell L.A."/>
            <person name="de Haan M."/>
            <person name="Hein C."/>
            <person name="Herbert C.J."/>
            <person name="Hollenberg C.P."/>
            <person name="Holmstroem K."/>
            <person name="Jacq C."/>
            <person name="Jacquet M."/>
            <person name="Jauniaux J.-C."/>
            <person name="Jonniaux J.-L."/>
            <person name="Kallesoee T."/>
            <person name="Kiesau P."/>
            <person name="Kirchrath L."/>
            <person name="Koetter P."/>
            <person name="Korol S."/>
            <person name="Liebl S."/>
            <person name="Logghe M."/>
            <person name="Lohan A.J.E."/>
            <person name="Louis E.J."/>
            <person name="Li Z.Y."/>
            <person name="Maat M.J."/>
            <person name="Mallet L."/>
            <person name="Mannhaupt G."/>
            <person name="Messenguy F."/>
            <person name="Miosga T."/>
            <person name="Molemans F."/>
            <person name="Mueller S."/>
            <person name="Nasr F."/>
            <person name="Obermaier B."/>
            <person name="Perea J."/>
            <person name="Pierard A."/>
            <person name="Piravandi E."/>
            <person name="Pohl F.M."/>
            <person name="Pohl T.M."/>
            <person name="Potier S."/>
            <person name="Proft M."/>
            <person name="Purnelle B."/>
            <person name="Ramezani Rad M."/>
            <person name="Rieger M."/>
            <person name="Rose M."/>
            <person name="Schaaff-Gerstenschlaeger I."/>
            <person name="Scherens B."/>
            <person name="Schwarzlose C."/>
            <person name="Skala J."/>
            <person name="Slonimski P.P."/>
            <person name="Smits P.H.M."/>
            <person name="Souciet J.-L."/>
            <person name="Steensma H.Y."/>
            <person name="Stucka R."/>
            <person name="Urrestarazu L.A."/>
            <person name="van der Aart Q.J.M."/>
            <person name="Van Dyck L."/>
            <person name="Vassarotti A."/>
            <person name="Vetter I."/>
            <person name="Vierendeels F."/>
            <person name="Vissers S."/>
            <person name="Wagner G."/>
            <person name="de Wergifosse P."/>
            <person name="Wolfe K.H."/>
            <person name="Zagulski M."/>
            <person name="Zimmermann F.K."/>
            <person name="Mewes H.-W."/>
            <person name="Kleine K."/>
        </authorList>
    </citation>
    <scope>NUCLEOTIDE SEQUENCE [LARGE SCALE GENOMIC DNA]</scope>
    <source>
        <strain>ATCC 204508 / S288c</strain>
    </source>
</reference>
<reference key="4">
    <citation type="journal article" date="2014" name="G3 (Bethesda)">
        <title>The reference genome sequence of Saccharomyces cerevisiae: Then and now.</title>
        <authorList>
            <person name="Engel S.R."/>
            <person name="Dietrich F.S."/>
            <person name="Fisk D.G."/>
            <person name="Binkley G."/>
            <person name="Balakrishnan R."/>
            <person name="Costanzo M.C."/>
            <person name="Dwight S.S."/>
            <person name="Hitz B.C."/>
            <person name="Karra K."/>
            <person name="Nash R.S."/>
            <person name="Weng S."/>
            <person name="Wong E.D."/>
            <person name="Lloyd P."/>
            <person name="Skrzypek M.S."/>
            <person name="Miyasato S.R."/>
            <person name="Simison M."/>
            <person name="Cherry J.M."/>
        </authorList>
    </citation>
    <scope>GENOME REANNOTATION</scope>
    <source>
        <strain>ATCC 204508 / S288c</strain>
    </source>
</reference>
<accession>P05316</accession>
<accession>D6VQ23</accession>
<gene>
    <name type="primary">FUR4</name>
    <name type="ordered locus">YBR021W</name>
    <name type="ORF">YBR0303</name>
</gene>
<comment type="function">
    <text>Transport of uracil.</text>
</comment>
<comment type="subcellular location">
    <subcellularLocation>
        <location>Membrane</location>
        <topology>Multi-pass membrane protein</topology>
    </subcellularLocation>
</comment>
<comment type="PTM">
    <text>Glycosylated (possible); but there is not yet direct biochemical evidence for it.</text>
</comment>
<comment type="similarity">
    <text evidence="2">Belongs to the purine-cytosine permease (2.A.39) family.</text>
</comment>
<organism>
    <name type="scientific">Saccharomyces cerevisiae (strain ATCC 204508 / S288c)</name>
    <name type="common">Baker's yeast</name>
    <dbReference type="NCBI Taxonomy" id="559292"/>
    <lineage>
        <taxon>Eukaryota</taxon>
        <taxon>Fungi</taxon>
        <taxon>Dikarya</taxon>
        <taxon>Ascomycota</taxon>
        <taxon>Saccharomycotina</taxon>
        <taxon>Saccharomycetes</taxon>
        <taxon>Saccharomycetales</taxon>
        <taxon>Saccharomycetaceae</taxon>
        <taxon>Saccharomyces</taxon>
    </lineage>
</organism>
<keyword id="KW-0472">Membrane</keyword>
<keyword id="KW-1185">Reference proteome</keyword>
<keyword id="KW-0812">Transmembrane</keyword>
<keyword id="KW-1133">Transmembrane helix</keyword>
<keyword id="KW-0813">Transport</keyword>
<sequence>MPDNLSLHLSGSSKRLNSRQLMESSNETFAPNNVDLEKEYKSSQSNITTEVYEASSFEEKVSSEKPQYSSFWKKIYYEYVVVDKSILGVSILDSFMYNQDLKPVEKERRVWSWYNYCYFWLAECFNINTWQIAATGLQLGLNWWQCWITIWIGYGFVGAFVVLASRVGSAYHLSFPISSRASFGIFFSLWPVINRVVMAIVWYSVQAYIAATPVSLMLKSIFGKDLQDKIPDHFGSPNATTYEFMCFFIFWAASLPFLLVPPHKIRHLFTVKAVLVPFASFGFLIWAIRRAHGRIALGSLTDVQPHGSAFSWAFLRSLMGCMANFSTMVINAPDFSRFSKNPNSALWSQLVCIPFLFSITCLIGILVTAAGYEIYGINYWSPLDVLEKFLQTTYNKGTRAGVFLISFVFAVAQLGTNISANSLSCGTDMSAIFPKFINIKRGSLFCAAMALCICPWNLMATSSKFTMALSAYAIFLSSIAGVVCSDYFVVRRGYIKLTHIYSHQKGSFYMYGNRFGINWRALAAYLCGVAPCLPGFIAEVGAPAIKVSDGAMKLYYLSYWVGYGLSFSSYTALCYFFPVPGCPVNNIIKDKGWFQRWANVDDFEEEWKDTIERDDLVDDNISVYEHEHEKTFI</sequence>